<comment type="function">
    <text evidence="1">Located at the top of the head of the small subunit, it contacts several helices of the 18S rRNA.</text>
</comment>
<comment type="subunit">
    <text evidence="7">Part of the small ribosomal subunit.</text>
</comment>
<comment type="subcellular location">
    <subcellularLocation>
        <location evidence="4 5">Mitochondrion</location>
    </subcellularLocation>
</comment>
<comment type="similarity">
    <text evidence="7">Belongs to the universal ribosomal protein uS13 family.</text>
</comment>
<protein>
    <recommendedName>
        <fullName evidence="6">Small ribosomal subunit protein uS13m</fullName>
    </recommendedName>
    <alternativeName>
        <fullName>Small ribosomal subunit protein S13, mitochondrial</fullName>
        <shortName>mS13</shortName>
    </alternativeName>
</protein>
<evidence type="ECO:0000250" key="1"/>
<evidence type="ECO:0000255" key="2"/>
<evidence type="ECO:0000256" key="3">
    <source>
        <dbReference type="SAM" id="MobiDB-lite"/>
    </source>
</evidence>
<evidence type="ECO:0000269" key="4">
    <source>
    </source>
</evidence>
<evidence type="ECO:0000269" key="5">
    <source>
    </source>
</evidence>
<evidence type="ECO:0000303" key="6">
    <source>
    </source>
</evidence>
<evidence type="ECO:0000305" key="7"/>
<organism>
    <name type="scientific">Arabidopsis thaliana</name>
    <name type="common">Mouse-ear cress</name>
    <dbReference type="NCBI Taxonomy" id="3702"/>
    <lineage>
        <taxon>Eukaryota</taxon>
        <taxon>Viridiplantae</taxon>
        <taxon>Streptophyta</taxon>
        <taxon>Embryophyta</taxon>
        <taxon>Tracheophyta</taxon>
        <taxon>Spermatophyta</taxon>
        <taxon>Magnoliopsida</taxon>
        <taxon>eudicotyledons</taxon>
        <taxon>Gunneridae</taxon>
        <taxon>Pentapetalae</taxon>
        <taxon>rosids</taxon>
        <taxon>malvids</taxon>
        <taxon>Brassicales</taxon>
        <taxon>Brassicaceae</taxon>
        <taxon>Camelineae</taxon>
        <taxon>Arabidopsis</taxon>
    </lineage>
</organism>
<accession>Q9CA19</accession>
<gene>
    <name type="primary">RPS13</name>
    <name type="ordered locus">At1g77750</name>
    <name type="ORF">T32E8.8</name>
</gene>
<name>RT13_ARATH</name>
<proteinExistence type="evidence at protein level"/>
<feature type="transit peptide" description="Mitochondrion" evidence="2">
    <location>
        <begin position="1"/>
        <end position="30"/>
    </location>
</feature>
<feature type="chain" id="PRO_0000030610" description="Small ribosomal subunit protein uS13m">
    <location>
        <begin position="31"/>
        <end position="154"/>
    </location>
</feature>
<feature type="region of interest" description="Disordered" evidence="3">
    <location>
        <begin position="121"/>
        <end position="154"/>
    </location>
</feature>
<feature type="compositionally biased region" description="Basic residues" evidence="3">
    <location>
        <begin position="136"/>
        <end position="154"/>
    </location>
</feature>
<sequence length="154" mass="17272">MLGLRRSATTLFDISQSLLRNVTFHGLRVQGIRVGNAEVPNNKPLKTGLQEVYGIGRRKSHQVLCHLGITNKLARDLTGKELIDLREEVGQHQHGDELRRRVGSEIQRLVEVDCYRGSRHRHGLPCRGQRTSTNARTKKGKAVAIAGKKKAPRK</sequence>
<reference key="1">
    <citation type="journal article" date="2000" name="Nature">
        <title>Sequence and analysis of chromosome 1 of the plant Arabidopsis thaliana.</title>
        <authorList>
            <person name="Theologis A."/>
            <person name="Ecker J.R."/>
            <person name="Palm C.J."/>
            <person name="Federspiel N.A."/>
            <person name="Kaul S."/>
            <person name="White O."/>
            <person name="Alonso J."/>
            <person name="Altafi H."/>
            <person name="Araujo R."/>
            <person name="Bowman C.L."/>
            <person name="Brooks S.Y."/>
            <person name="Buehler E."/>
            <person name="Chan A."/>
            <person name="Chao Q."/>
            <person name="Chen H."/>
            <person name="Cheuk R.F."/>
            <person name="Chin C.W."/>
            <person name="Chung M.K."/>
            <person name="Conn L."/>
            <person name="Conway A.B."/>
            <person name="Conway A.R."/>
            <person name="Creasy T.H."/>
            <person name="Dewar K."/>
            <person name="Dunn P."/>
            <person name="Etgu P."/>
            <person name="Feldblyum T.V."/>
            <person name="Feng J.-D."/>
            <person name="Fong B."/>
            <person name="Fujii C.Y."/>
            <person name="Gill J.E."/>
            <person name="Goldsmith A.D."/>
            <person name="Haas B."/>
            <person name="Hansen N.F."/>
            <person name="Hughes B."/>
            <person name="Huizar L."/>
            <person name="Hunter J.L."/>
            <person name="Jenkins J."/>
            <person name="Johnson-Hopson C."/>
            <person name="Khan S."/>
            <person name="Khaykin E."/>
            <person name="Kim C.J."/>
            <person name="Koo H.L."/>
            <person name="Kremenetskaia I."/>
            <person name="Kurtz D.B."/>
            <person name="Kwan A."/>
            <person name="Lam B."/>
            <person name="Langin-Hooper S."/>
            <person name="Lee A."/>
            <person name="Lee J.M."/>
            <person name="Lenz C.A."/>
            <person name="Li J.H."/>
            <person name="Li Y.-P."/>
            <person name="Lin X."/>
            <person name="Liu S.X."/>
            <person name="Liu Z.A."/>
            <person name="Luros J.S."/>
            <person name="Maiti R."/>
            <person name="Marziali A."/>
            <person name="Militscher J."/>
            <person name="Miranda M."/>
            <person name="Nguyen M."/>
            <person name="Nierman W.C."/>
            <person name="Osborne B.I."/>
            <person name="Pai G."/>
            <person name="Peterson J."/>
            <person name="Pham P.K."/>
            <person name="Rizzo M."/>
            <person name="Rooney T."/>
            <person name="Rowley D."/>
            <person name="Sakano H."/>
            <person name="Salzberg S.L."/>
            <person name="Schwartz J.R."/>
            <person name="Shinn P."/>
            <person name="Southwick A.M."/>
            <person name="Sun H."/>
            <person name="Tallon L.J."/>
            <person name="Tambunga G."/>
            <person name="Toriumi M.J."/>
            <person name="Town C.D."/>
            <person name="Utterback T."/>
            <person name="Van Aken S."/>
            <person name="Vaysberg M."/>
            <person name="Vysotskaia V.S."/>
            <person name="Walker M."/>
            <person name="Wu D."/>
            <person name="Yu G."/>
            <person name="Fraser C.M."/>
            <person name="Venter J.C."/>
            <person name="Davis R.W."/>
        </authorList>
    </citation>
    <scope>NUCLEOTIDE SEQUENCE [LARGE SCALE GENOMIC DNA]</scope>
    <source>
        <strain>cv. Columbia</strain>
    </source>
</reference>
<reference key="2">
    <citation type="journal article" date="2017" name="Plant J.">
        <title>Araport11: a complete reannotation of the Arabidopsis thaliana reference genome.</title>
        <authorList>
            <person name="Cheng C.Y."/>
            <person name="Krishnakumar V."/>
            <person name="Chan A.P."/>
            <person name="Thibaud-Nissen F."/>
            <person name="Schobel S."/>
            <person name="Town C.D."/>
        </authorList>
    </citation>
    <scope>GENOME REANNOTATION</scope>
    <source>
        <strain>cv. Columbia</strain>
    </source>
</reference>
<reference key="3">
    <citation type="journal article" date="2003" name="Science">
        <title>Empirical analysis of transcriptional activity in the Arabidopsis genome.</title>
        <authorList>
            <person name="Yamada K."/>
            <person name="Lim J."/>
            <person name="Dale J.M."/>
            <person name="Chen H."/>
            <person name="Shinn P."/>
            <person name="Palm C.J."/>
            <person name="Southwick A.M."/>
            <person name="Wu H.C."/>
            <person name="Kim C.J."/>
            <person name="Nguyen M."/>
            <person name="Pham P.K."/>
            <person name="Cheuk R.F."/>
            <person name="Karlin-Newmann G."/>
            <person name="Liu S.X."/>
            <person name="Lam B."/>
            <person name="Sakano H."/>
            <person name="Wu T."/>
            <person name="Yu G."/>
            <person name="Miranda M."/>
            <person name="Quach H.L."/>
            <person name="Tripp M."/>
            <person name="Chang C.H."/>
            <person name="Lee J.M."/>
            <person name="Toriumi M.J."/>
            <person name="Chan M.M."/>
            <person name="Tang C.C."/>
            <person name="Onodera C.S."/>
            <person name="Deng J.M."/>
            <person name="Akiyama K."/>
            <person name="Ansari Y."/>
            <person name="Arakawa T."/>
            <person name="Banh J."/>
            <person name="Banno F."/>
            <person name="Bowser L."/>
            <person name="Brooks S.Y."/>
            <person name="Carninci P."/>
            <person name="Chao Q."/>
            <person name="Choy N."/>
            <person name="Enju A."/>
            <person name="Goldsmith A.D."/>
            <person name="Gurjal M."/>
            <person name="Hansen N.F."/>
            <person name="Hayashizaki Y."/>
            <person name="Johnson-Hopson C."/>
            <person name="Hsuan V.W."/>
            <person name="Iida K."/>
            <person name="Karnes M."/>
            <person name="Khan S."/>
            <person name="Koesema E."/>
            <person name="Ishida J."/>
            <person name="Jiang P.X."/>
            <person name="Jones T."/>
            <person name="Kawai J."/>
            <person name="Kamiya A."/>
            <person name="Meyers C."/>
            <person name="Nakajima M."/>
            <person name="Narusaka M."/>
            <person name="Seki M."/>
            <person name="Sakurai T."/>
            <person name="Satou M."/>
            <person name="Tamse R."/>
            <person name="Vaysberg M."/>
            <person name="Wallender E.K."/>
            <person name="Wong C."/>
            <person name="Yamamura Y."/>
            <person name="Yuan S."/>
            <person name="Shinozaki K."/>
            <person name="Davis R.W."/>
            <person name="Theologis A."/>
            <person name="Ecker J.R."/>
        </authorList>
    </citation>
    <scope>NUCLEOTIDE SEQUENCE [LARGE SCALE MRNA]</scope>
    <source>
        <strain>cv. Columbia</strain>
    </source>
</reference>
<reference key="4">
    <citation type="journal article" date="2002" name="Curr. Genet.">
        <title>The gene encoding Arabidopsis thaliana mitochondrial ribosomal protein S13 is a recent duplication of the gene encoding plastid S13.</title>
        <authorList>
            <person name="Mollier P."/>
            <person name="Hoffmann B."/>
            <person name="Debast C."/>
            <person name="Small I."/>
        </authorList>
    </citation>
    <scope>SUBCELLULAR LOCATION</scope>
</reference>
<reference key="5">
    <citation type="journal article" date="2002" name="Plant Cell">
        <title>Genes for two mitochondrial ribosomal proteins in flowering plants are derived from their chloroplast or cytosolic counterparts.</title>
        <authorList>
            <person name="Adams K.L."/>
            <person name="Daley D.O."/>
            <person name="Whelan J."/>
            <person name="Palmer J.D."/>
        </authorList>
    </citation>
    <scope>SUBCELLULAR LOCATION</scope>
</reference>
<reference key="6">
    <citation type="journal article" date="2023" name="Plant Cell">
        <title>An updated nomenclature for plant ribosomal protein genes.</title>
        <authorList>
            <person name="Scarpin M.R."/>
            <person name="Busche M."/>
            <person name="Martinez R.E."/>
            <person name="Harper L.C."/>
            <person name="Reiser L."/>
            <person name="Szakonyi D."/>
            <person name="Merchante C."/>
            <person name="Lan T."/>
            <person name="Xiong W."/>
            <person name="Mo B."/>
            <person name="Tang G."/>
            <person name="Chen X."/>
            <person name="Bailey-Serres J."/>
            <person name="Browning K.S."/>
            <person name="Brunkard J.O."/>
        </authorList>
    </citation>
    <scope>NOMENCLATURE</scope>
</reference>
<dbReference type="EMBL" id="AC012193">
    <property type="protein sequence ID" value="AAG51625.1"/>
    <property type="molecule type" value="Genomic_DNA"/>
</dbReference>
<dbReference type="EMBL" id="CP002684">
    <property type="protein sequence ID" value="AEE36017.1"/>
    <property type="molecule type" value="Genomic_DNA"/>
</dbReference>
<dbReference type="EMBL" id="BT010186">
    <property type="protein sequence ID" value="AAQ22655.1"/>
    <property type="molecule type" value="mRNA"/>
</dbReference>
<dbReference type="PIR" id="D96807">
    <property type="entry name" value="D96807"/>
</dbReference>
<dbReference type="RefSeq" id="NP_177898.1">
    <property type="nucleotide sequence ID" value="NM_106424.4"/>
</dbReference>
<dbReference type="PDB" id="6XYW">
    <property type="method" value="EM"/>
    <property type="resolution" value="3.86 A"/>
    <property type="chains" value="Bl=1-154"/>
</dbReference>
<dbReference type="PDBsum" id="6XYW"/>
<dbReference type="EMDB" id="EMD-10654"/>
<dbReference type="SMR" id="Q9CA19"/>
<dbReference type="FunCoup" id="Q9CA19">
    <property type="interactions" value="488"/>
</dbReference>
<dbReference type="IntAct" id="Q9CA19">
    <property type="interactions" value="1"/>
</dbReference>
<dbReference type="STRING" id="3702.Q9CA19"/>
<dbReference type="PaxDb" id="3702-AT1G77750.1"/>
<dbReference type="ProteomicsDB" id="228047"/>
<dbReference type="EnsemblPlants" id="AT1G77750.1">
    <property type="protein sequence ID" value="AT1G77750.1"/>
    <property type="gene ID" value="AT1G77750"/>
</dbReference>
<dbReference type="GeneID" id="844111"/>
<dbReference type="Gramene" id="AT1G77750.1">
    <property type="protein sequence ID" value="AT1G77750.1"/>
    <property type="gene ID" value="AT1G77750"/>
</dbReference>
<dbReference type="KEGG" id="ath:AT1G77750"/>
<dbReference type="Araport" id="AT1G77750"/>
<dbReference type="TAIR" id="AT1G77750"/>
<dbReference type="eggNOG" id="KOG3311">
    <property type="taxonomic scope" value="Eukaryota"/>
</dbReference>
<dbReference type="HOGENOM" id="CLU_103849_1_0_1"/>
<dbReference type="InParanoid" id="Q9CA19"/>
<dbReference type="OMA" id="LVGIQCY"/>
<dbReference type="OrthoDB" id="1030614at2759"/>
<dbReference type="PhylomeDB" id="Q9CA19"/>
<dbReference type="PRO" id="PR:Q9CA19"/>
<dbReference type="Proteomes" id="UP000006548">
    <property type="component" value="Chromosome 1"/>
</dbReference>
<dbReference type="ExpressionAtlas" id="Q9CA19">
    <property type="expression patterns" value="baseline and differential"/>
</dbReference>
<dbReference type="GO" id="GO:0005763">
    <property type="term" value="C:mitochondrial small ribosomal subunit"/>
    <property type="evidence" value="ECO:0000304"/>
    <property type="project" value="TAIR"/>
</dbReference>
<dbReference type="GO" id="GO:0005739">
    <property type="term" value="C:mitochondrion"/>
    <property type="evidence" value="ECO:0000314"/>
    <property type="project" value="TAIR"/>
</dbReference>
<dbReference type="GO" id="GO:0019843">
    <property type="term" value="F:rRNA binding"/>
    <property type="evidence" value="ECO:0007669"/>
    <property type="project" value="UniProtKB-KW"/>
</dbReference>
<dbReference type="GO" id="GO:0003735">
    <property type="term" value="F:structural constituent of ribosome"/>
    <property type="evidence" value="ECO:0007669"/>
    <property type="project" value="InterPro"/>
</dbReference>
<dbReference type="GO" id="GO:0006412">
    <property type="term" value="P:translation"/>
    <property type="evidence" value="ECO:0007669"/>
    <property type="project" value="InterPro"/>
</dbReference>
<dbReference type="FunFam" id="1.10.8.50:FF:000001">
    <property type="entry name" value="30S ribosomal protein S13"/>
    <property type="match status" value="1"/>
</dbReference>
<dbReference type="Gene3D" id="1.10.8.50">
    <property type="match status" value="1"/>
</dbReference>
<dbReference type="Gene3D" id="4.10.910.10">
    <property type="entry name" value="30s ribosomal protein s13, domain 2"/>
    <property type="match status" value="1"/>
</dbReference>
<dbReference type="HAMAP" id="MF_01315">
    <property type="entry name" value="Ribosomal_uS13"/>
    <property type="match status" value="1"/>
</dbReference>
<dbReference type="InterPro" id="IPR027437">
    <property type="entry name" value="Rbsml_uS13_C"/>
</dbReference>
<dbReference type="InterPro" id="IPR001892">
    <property type="entry name" value="Ribosomal_uS13"/>
</dbReference>
<dbReference type="InterPro" id="IPR010979">
    <property type="entry name" value="Ribosomal_uS13-like_H2TH"/>
</dbReference>
<dbReference type="InterPro" id="IPR018269">
    <property type="entry name" value="Ribosomal_uS13_CS"/>
</dbReference>
<dbReference type="PANTHER" id="PTHR10871">
    <property type="entry name" value="30S RIBOSOMAL PROTEIN S13/40S RIBOSOMAL PROTEIN S18"/>
    <property type="match status" value="1"/>
</dbReference>
<dbReference type="PANTHER" id="PTHR10871:SF28">
    <property type="entry name" value="SMALL RIBOSOMAL SUBUNIT PROTEIN US13M"/>
    <property type="match status" value="1"/>
</dbReference>
<dbReference type="Pfam" id="PF00416">
    <property type="entry name" value="Ribosomal_S13"/>
    <property type="match status" value="1"/>
</dbReference>
<dbReference type="SUPFAM" id="SSF46946">
    <property type="entry name" value="S13-like H2TH domain"/>
    <property type="match status" value="1"/>
</dbReference>
<dbReference type="PROSITE" id="PS00646">
    <property type="entry name" value="RIBOSOMAL_S13_1"/>
    <property type="match status" value="1"/>
</dbReference>
<dbReference type="PROSITE" id="PS50159">
    <property type="entry name" value="RIBOSOMAL_S13_2"/>
    <property type="match status" value="1"/>
</dbReference>
<keyword id="KW-0002">3D-structure</keyword>
<keyword id="KW-0496">Mitochondrion</keyword>
<keyword id="KW-1185">Reference proteome</keyword>
<keyword id="KW-0687">Ribonucleoprotein</keyword>
<keyword id="KW-0689">Ribosomal protein</keyword>
<keyword id="KW-0694">RNA-binding</keyword>
<keyword id="KW-0699">rRNA-binding</keyword>
<keyword id="KW-0809">Transit peptide</keyword>